<name>RL17_TERTT</name>
<organism>
    <name type="scientific">Teredinibacter turnerae (strain ATCC 39867 / T7901)</name>
    <dbReference type="NCBI Taxonomy" id="377629"/>
    <lineage>
        <taxon>Bacteria</taxon>
        <taxon>Pseudomonadati</taxon>
        <taxon>Pseudomonadota</taxon>
        <taxon>Gammaproteobacteria</taxon>
        <taxon>Cellvibrionales</taxon>
        <taxon>Cellvibrionaceae</taxon>
        <taxon>Teredinibacter</taxon>
    </lineage>
</organism>
<protein>
    <recommendedName>
        <fullName evidence="1">Large ribosomal subunit protein bL17</fullName>
    </recommendedName>
    <alternativeName>
        <fullName evidence="2">50S ribosomal protein L17</fullName>
    </alternativeName>
</protein>
<comment type="subunit">
    <text evidence="1">Part of the 50S ribosomal subunit. Contacts protein L32.</text>
</comment>
<comment type="similarity">
    <text evidence="1">Belongs to the bacterial ribosomal protein bL17 family.</text>
</comment>
<sequence>MRHRHSGRQLNRNSSHRKAMFRNMVSSLVEHELIKTTLPKAKELRRYAEPLITLSKVDSVANRRLAFDRLRNKSTVGKLFNELGPRYEGRPGGYLRILKCGFRAGDKAPMAYVELVGRPEPVAEADVSAED</sequence>
<keyword id="KW-1185">Reference proteome</keyword>
<keyword id="KW-0687">Ribonucleoprotein</keyword>
<keyword id="KW-0689">Ribosomal protein</keyword>
<gene>
    <name evidence="1" type="primary">rplQ</name>
    <name type="ordered locus">TERTU_0934</name>
</gene>
<reference key="1">
    <citation type="journal article" date="2009" name="PLoS ONE">
        <title>The complete genome of Teredinibacter turnerae T7901: an intracellular endosymbiont of marine wood-boring bivalves (shipworms).</title>
        <authorList>
            <person name="Yang J.C."/>
            <person name="Madupu R."/>
            <person name="Durkin A.S."/>
            <person name="Ekborg N.A."/>
            <person name="Pedamallu C.S."/>
            <person name="Hostetler J.B."/>
            <person name="Radune D."/>
            <person name="Toms B.S."/>
            <person name="Henrissat B."/>
            <person name="Coutinho P.M."/>
            <person name="Schwarz S."/>
            <person name="Field L."/>
            <person name="Trindade-Silva A.E."/>
            <person name="Soares C.A.G."/>
            <person name="Elshahawi S."/>
            <person name="Hanora A."/>
            <person name="Schmidt E.W."/>
            <person name="Haygood M.G."/>
            <person name="Posfai J."/>
            <person name="Benner J."/>
            <person name="Madinger C."/>
            <person name="Nove J."/>
            <person name="Anton B."/>
            <person name="Chaudhary K."/>
            <person name="Foster J."/>
            <person name="Holman A."/>
            <person name="Kumar S."/>
            <person name="Lessard P.A."/>
            <person name="Luyten Y.A."/>
            <person name="Slatko B."/>
            <person name="Wood N."/>
            <person name="Wu B."/>
            <person name="Teplitski M."/>
            <person name="Mougous J.D."/>
            <person name="Ward N."/>
            <person name="Eisen J.A."/>
            <person name="Badger J.H."/>
            <person name="Distel D.L."/>
        </authorList>
    </citation>
    <scope>NUCLEOTIDE SEQUENCE [LARGE SCALE GENOMIC DNA]</scope>
    <source>
        <strain>ATCC 39867 / T7901</strain>
    </source>
</reference>
<dbReference type="EMBL" id="CP001614">
    <property type="protein sequence ID" value="ACR12731.1"/>
    <property type="molecule type" value="Genomic_DNA"/>
</dbReference>
<dbReference type="RefSeq" id="WP_015818843.1">
    <property type="nucleotide sequence ID" value="NC_012997.1"/>
</dbReference>
<dbReference type="SMR" id="C5BQ87"/>
<dbReference type="STRING" id="377629.TERTU_0934"/>
<dbReference type="KEGG" id="ttu:TERTU_0934"/>
<dbReference type="eggNOG" id="COG0203">
    <property type="taxonomic scope" value="Bacteria"/>
</dbReference>
<dbReference type="HOGENOM" id="CLU_074407_2_0_6"/>
<dbReference type="OrthoDB" id="9809073at2"/>
<dbReference type="Proteomes" id="UP000009080">
    <property type="component" value="Chromosome"/>
</dbReference>
<dbReference type="GO" id="GO:0022625">
    <property type="term" value="C:cytosolic large ribosomal subunit"/>
    <property type="evidence" value="ECO:0007669"/>
    <property type="project" value="TreeGrafter"/>
</dbReference>
<dbReference type="GO" id="GO:0003735">
    <property type="term" value="F:structural constituent of ribosome"/>
    <property type="evidence" value="ECO:0007669"/>
    <property type="project" value="InterPro"/>
</dbReference>
<dbReference type="GO" id="GO:0006412">
    <property type="term" value="P:translation"/>
    <property type="evidence" value="ECO:0007669"/>
    <property type="project" value="UniProtKB-UniRule"/>
</dbReference>
<dbReference type="FunFam" id="3.90.1030.10:FF:000001">
    <property type="entry name" value="50S ribosomal protein L17"/>
    <property type="match status" value="1"/>
</dbReference>
<dbReference type="Gene3D" id="3.90.1030.10">
    <property type="entry name" value="Ribosomal protein L17"/>
    <property type="match status" value="1"/>
</dbReference>
<dbReference type="HAMAP" id="MF_01368">
    <property type="entry name" value="Ribosomal_bL17"/>
    <property type="match status" value="1"/>
</dbReference>
<dbReference type="InterPro" id="IPR000456">
    <property type="entry name" value="Ribosomal_bL17"/>
</dbReference>
<dbReference type="InterPro" id="IPR047859">
    <property type="entry name" value="Ribosomal_bL17_CS"/>
</dbReference>
<dbReference type="InterPro" id="IPR036373">
    <property type="entry name" value="Ribosomal_bL17_sf"/>
</dbReference>
<dbReference type="NCBIfam" id="TIGR00059">
    <property type="entry name" value="L17"/>
    <property type="match status" value="1"/>
</dbReference>
<dbReference type="PANTHER" id="PTHR14413:SF16">
    <property type="entry name" value="LARGE RIBOSOMAL SUBUNIT PROTEIN BL17M"/>
    <property type="match status" value="1"/>
</dbReference>
<dbReference type="PANTHER" id="PTHR14413">
    <property type="entry name" value="RIBOSOMAL PROTEIN L17"/>
    <property type="match status" value="1"/>
</dbReference>
<dbReference type="Pfam" id="PF01196">
    <property type="entry name" value="Ribosomal_L17"/>
    <property type="match status" value="1"/>
</dbReference>
<dbReference type="SUPFAM" id="SSF64263">
    <property type="entry name" value="Prokaryotic ribosomal protein L17"/>
    <property type="match status" value="1"/>
</dbReference>
<dbReference type="PROSITE" id="PS01167">
    <property type="entry name" value="RIBOSOMAL_L17"/>
    <property type="match status" value="1"/>
</dbReference>
<accession>C5BQ87</accession>
<evidence type="ECO:0000255" key="1">
    <source>
        <dbReference type="HAMAP-Rule" id="MF_01368"/>
    </source>
</evidence>
<evidence type="ECO:0000305" key="2"/>
<feature type="chain" id="PRO_1000215020" description="Large ribosomal subunit protein bL17">
    <location>
        <begin position="1"/>
        <end position="131"/>
    </location>
</feature>
<proteinExistence type="inferred from homology"/>